<proteinExistence type="inferred from homology"/>
<comment type="function">
    <text evidence="1">Part of the outer membrane protein assembly complex, which is involved in assembly and insertion of beta-barrel proteins into the outer membrane.</text>
</comment>
<comment type="subunit">
    <text evidence="1">Part of the Bam complex.</text>
</comment>
<comment type="subcellular location">
    <subcellularLocation>
        <location evidence="1">Cell outer membrane</location>
        <topology evidence="1">Lipid-anchor</topology>
    </subcellularLocation>
</comment>
<comment type="similarity">
    <text evidence="1">Belongs to the BamD family.</text>
</comment>
<organism>
    <name type="scientific">Vibrio cholerae serotype O1 (strain ATCC 39315 / El Tor Inaba N16961)</name>
    <dbReference type="NCBI Taxonomy" id="243277"/>
    <lineage>
        <taxon>Bacteria</taxon>
        <taxon>Pseudomonadati</taxon>
        <taxon>Pseudomonadota</taxon>
        <taxon>Gammaproteobacteria</taxon>
        <taxon>Vibrionales</taxon>
        <taxon>Vibrionaceae</taxon>
        <taxon>Vibrio</taxon>
    </lineage>
</organism>
<accession>Q9KU21</accession>
<sequence>MKYQTLSGLLALSLLFGCSSSPDVVPDVPPSQLYSEAQTALQSGTWLTAIEKLEALDSRYPFGAYSEQVQLDLIYAYYKNDDLALGLATIERFTRLNPTHEKMDWVLYMRGLTHMAQDRNFMHDLFNIDRRDRDPEPVKAAFADFKKLLQRYPNSPYAEDAQRRMFALKNRLAEYDLATADFYLRREAWIAAINRTQELQKTYPDTEAARKSLEIQLEAYQQLGLTDAIERTKQLMQLNPL</sequence>
<feature type="signal peptide" evidence="1">
    <location>
        <begin position="1"/>
        <end position="17"/>
    </location>
</feature>
<feature type="chain" id="PRO_0000036233" description="Outer membrane protein assembly factor BamD">
    <location>
        <begin position="18"/>
        <end position="241"/>
    </location>
</feature>
<feature type="lipid moiety-binding region" description="N-palmitoyl cysteine" evidence="1">
    <location>
        <position position="18"/>
    </location>
</feature>
<feature type="lipid moiety-binding region" description="S-diacylglycerol cysteine" evidence="1">
    <location>
        <position position="18"/>
    </location>
</feature>
<gene>
    <name evidence="1" type="primary">bamD</name>
    <name type="ordered locus">VC_0708</name>
</gene>
<dbReference type="EMBL" id="AE003852">
    <property type="protein sequence ID" value="AAF93873.1"/>
    <property type="molecule type" value="Genomic_DNA"/>
</dbReference>
<dbReference type="PIR" id="F82289">
    <property type="entry name" value="F82289"/>
</dbReference>
<dbReference type="RefSeq" id="NP_230357.1">
    <property type="nucleotide sequence ID" value="NC_002505.1"/>
</dbReference>
<dbReference type="RefSeq" id="WP_000877198.1">
    <property type="nucleotide sequence ID" value="NZ_LT906614.1"/>
</dbReference>
<dbReference type="SMR" id="Q9KU21"/>
<dbReference type="STRING" id="243277.VC_0708"/>
<dbReference type="DNASU" id="2615712"/>
<dbReference type="EnsemblBacteria" id="AAF93873">
    <property type="protein sequence ID" value="AAF93873"/>
    <property type="gene ID" value="VC_0708"/>
</dbReference>
<dbReference type="KEGG" id="vch:VC_0708"/>
<dbReference type="PATRIC" id="fig|243277.26.peg.678"/>
<dbReference type="eggNOG" id="COG4105">
    <property type="taxonomic scope" value="Bacteria"/>
</dbReference>
<dbReference type="HOGENOM" id="CLU_065982_0_2_6"/>
<dbReference type="Proteomes" id="UP000000584">
    <property type="component" value="Chromosome 1"/>
</dbReference>
<dbReference type="GO" id="GO:1990063">
    <property type="term" value="C:Bam protein complex"/>
    <property type="evidence" value="ECO:0000318"/>
    <property type="project" value="GO_Central"/>
</dbReference>
<dbReference type="GO" id="GO:0043165">
    <property type="term" value="P:Gram-negative-bacterium-type cell outer membrane assembly"/>
    <property type="evidence" value="ECO:0007669"/>
    <property type="project" value="UniProtKB-UniRule"/>
</dbReference>
<dbReference type="GO" id="GO:0051205">
    <property type="term" value="P:protein insertion into membrane"/>
    <property type="evidence" value="ECO:0000318"/>
    <property type="project" value="GO_Central"/>
</dbReference>
<dbReference type="CDD" id="cd15830">
    <property type="entry name" value="BamD"/>
    <property type="match status" value="1"/>
</dbReference>
<dbReference type="FunFam" id="1.25.40.10:FF:000015">
    <property type="entry name" value="Outer membrane protein assembly factor BamD"/>
    <property type="match status" value="1"/>
</dbReference>
<dbReference type="Gene3D" id="1.25.40.10">
    <property type="entry name" value="Tetratricopeptide repeat domain"/>
    <property type="match status" value="1"/>
</dbReference>
<dbReference type="HAMAP" id="MF_00922">
    <property type="entry name" value="OM_assembly_BamD"/>
    <property type="match status" value="1"/>
</dbReference>
<dbReference type="InterPro" id="IPR017689">
    <property type="entry name" value="BamD"/>
</dbReference>
<dbReference type="InterPro" id="IPR039565">
    <property type="entry name" value="BamD-like"/>
</dbReference>
<dbReference type="InterPro" id="IPR011990">
    <property type="entry name" value="TPR-like_helical_dom_sf"/>
</dbReference>
<dbReference type="NCBIfam" id="TIGR03302">
    <property type="entry name" value="OM_YfiO"/>
    <property type="match status" value="1"/>
</dbReference>
<dbReference type="PANTHER" id="PTHR37423:SF1">
    <property type="entry name" value="OUTER MEMBRANE PROTEIN ASSEMBLY FACTOR BAMD"/>
    <property type="match status" value="1"/>
</dbReference>
<dbReference type="PANTHER" id="PTHR37423">
    <property type="entry name" value="SOLUBLE LYTIC MUREIN TRANSGLYCOSYLASE-RELATED"/>
    <property type="match status" value="1"/>
</dbReference>
<dbReference type="Pfam" id="PF13525">
    <property type="entry name" value="YfiO"/>
    <property type="match status" value="1"/>
</dbReference>
<dbReference type="SUPFAM" id="SSF48452">
    <property type="entry name" value="TPR-like"/>
    <property type="match status" value="1"/>
</dbReference>
<dbReference type="PROSITE" id="PS51257">
    <property type="entry name" value="PROKAR_LIPOPROTEIN"/>
    <property type="match status" value="1"/>
</dbReference>
<reference key="1">
    <citation type="journal article" date="2000" name="Nature">
        <title>DNA sequence of both chromosomes of the cholera pathogen Vibrio cholerae.</title>
        <authorList>
            <person name="Heidelberg J.F."/>
            <person name="Eisen J.A."/>
            <person name="Nelson W.C."/>
            <person name="Clayton R.A."/>
            <person name="Gwinn M.L."/>
            <person name="Dodson R.J."/>
            <person name="Haft D.H."/>
            <person name="Hickey E.K."/>
            <person name="Peterson J.D."/>
            <person name="Umayam L.A."/>
            <person name="Gill S.R."/>
            <person name="Nelson K.E."/>
            <person name="Read T.D."/>
            <person name="Tettelin H."/>
            <person name="Richardson D.L."/>
            <person name="Ermolaeva M.D."/>
            <person name="Vamathevan J.J."/>
            <person name="Bass S."/>
            <person name="Qin H."/>
            <person name="Dragoi I."/>
            <person name="Sellers P."/>
            <person name="McDonald L.A."/>
            <person name="Utterback T.R."/>
            <person name="Fleischmann R.D."/>
            <person name="Nierman W.C."/>
            <person name="White O."/>
            <person name="Salzberg S.L."/>
            <person name="Smith H.O."/>
            <person name="Colwell R.R."/>
            <person name="Mekalanos J.J."/>
            <person name="Venter J.C."/>
            <person name="Fraser C.M."/>
        </authorList>
    </citation>
    <scope>NUCLEOTIDE SEQUENCE [LARGE SCALE GENOMIC DNA]</scope>
    <source>
        <strain>ATCC 39315 / El Tor Inaba N16961</strain>
    </source>
</reference>
<name>BAMD_VIBCH</name>
<evidence type="ECO:0000255" key="1">
    <source>
        <dbReference type="HAMAP-Rule" id="MF_00922"/>
    </source>
</evidence>
<keyword id="KW-0998">Cell outer membrane</keyword>
<keyword id="KW-0449">Lipoprotein</keyword>
<keyword id="KW-0472">Membrane</keyword>
<keyword id="KW-0564">Palmitate</keyword>
<keyword id="KW-1185">Reference proteome</keyword>
<keyword id="KW-0732">Signal</keyword>
<protein>
    <recommendedName>
        <fullName evidence="1">Outer membrane protein assembly factor BamD</fullName>
    </recommendedName>
</protein>